<proteinExistence type="evidence at transcript level"/>
<protein>
    <recommendedName>
        <fullName>Muscarinic acetylcholine receptor M1</fullName>
    </recommendedName>
</protein>
<sequence length="460" mass="51322">MNTSAPPAVSPNITVLAPGKGPWQVAFIGITTGLLSLATVTGNLLVLISFKVNTELKTVNNYFLLSLACADLIIGTFSMNLYTTYLLMGHWALGTLACDLWLALDYVASNASVMNLLLISFDRYFSVTRPLSYRAKRTPRRAALMIGLAWLVSFVLWAPAILFWQYLVGERTVLAGQCYIQFLSQPIITFGTAMAAFYLPVTVMCTLYWRIYRETESRARELAALQGSETPGKGGGSSSSSERSQPGAEGSPGTPPGRCCRCCRAPRLLQAYSWKEEEEEDEGSMESLTSSEGEEPGSEVVIKMPMVDPEAQAPTKQPPRSSPNTVKRPTKKGRDRAGKGQKPRGKEQLAKRKTFSLVKEKKAARTLSAILLAFILTWTPYNIMVLVSTFCKDCVPETLWELGYWLCYVNSTINPMCYALCNKAFRDTFRLLLLCRWDKRRWRKIPKRPGSVHRTPSRQC</sequence>
<feature type="chain" id="PRO_0000232905" description="Muscarinic acetylcholine receptor M1">
    <location>
        <begin position="1"/>
        <end position="460"/>
    </location>
</feature>
<feature type="topological domain" description="Extracellular" evidence="1">
    <location>
        <begin position="1"/>
        <end position="22"/>
    </location>
</feature>
<feature type="transmembrane region" description="Helical; Name=1" evidence="1">
    <location>
        <begin position="23"/>
        <end position="48"/>
    </location>
</feature>
<feature type="topological domain" description="Cytoplasmic" evidence="1">
    <location>
        <begin position="49"/>
        <end position="62"/>
    </location>
</feature>
<feature type="transmembrane region" description="Helical; Name=2" evidence="1">
    <location>
        <begin position="63"/>
        <end position="84"/>
    </location>
</feature>
<feature type="topological domain" description="Extracellular" evidence="1">
    <location>
        <begin position="85"/>
        <end position="95"/>
    </location>
</feature>
<feature type="transmembrane region" description="Helical; Name=3" evidence="1">
    <location>
        <begin position="96"/>
        <end position="121"/>
    </location>
</feature>
<feature type="topological domain" description="Cytoplasmic" evidence="1">
    <location>
        <begin position="122"/>
        <end position="142"/>
    </location>
</feature>
<feature type="transmembrane region" description="Helical; Name=4" evidence="1">
    <location>
        <begin position="143"/>
        <end position="164"/>
    </location>
</feature>
<feature type="topological domain" description="Extracellular" evidence="1">
    <location>
        <begin position="165"/>
        <end position="185"/>
    </location>
</feature>
<feature type="transmembrane region" description="Helical; Name=5" evidence="1">
    <location>
        <begin position="186"/>
        <end position="209"/>
    </location>
</feature>
<feature type="topological domain" description="Cytoplasmic" evidence="1">
    <location>
        <begin position="210"/>
        <end position="366"/>
    </location>
</feature>
<feature type="transmembrane region" description="Helical; Name=6" evidence="1">
    <location>
        <begin position="367"/>
        <end position="390"/>
    </location>
</feature>
<feature type="topological domain" description="Extracellular" evidence="1">
    <location>
        <begin position="391"/>
        <end position="397"/>
    </location>
</feature>
<feature type="transmembrane region" description="Helical; Name=7" evidence="1">
    <location>
        <begin position="398"/>
        <end position="420"/>
    </location>
</feature>
<feature type="topological domain" description="Cytoplasmic" evidence="1">
    <location>
        <begin position="421"/>
        <end position="460"/>
    </location>
</feature>
<feature type="region of interest" description="Disordered" evidence="6">
    <location>
        <begin position="225"/>
        <end position="256"/>
    </location>
</feature>
<feature type="region of interest" description="Disordered" evidence="6">
    <location>
        <begin position="274"/>
        <end position="297"/>
    </location>
</feature>
<feature type="region of interest" description="Disordered" evidence="6">
    <location>
        <begin position="310"/>
        <end position="351"/>
    </location>
</feature>
<feature type="compositionally biased region" description="Low complexity" evidence="6">
    <location>
        <begin position="238"/>
        <end position="247"/>
    </location>
</feature>
<feature type="compositionally biased region" description="Basic residues" evidence="6">
    <location>
        <begin position="328"/>
        <end position="343"/>
    </location>
</feature>
<feature type="modified residue" description="Phosphothreonine" evidence="2">
    <location>
        <position position="230"/>
    </location>
</feature>
<feature type="modified residue" description="Phosphothreonine" evidence="3">
    <location>
        <position position="428"/>
    </location>
</feature>
<feature type="modified residue" description="Phosphoserine" evidence="3">
    <location>
        <position position="451"/>
    </location>
</feature>
<feature type="modified residue" description="Phosphothreonine" evidence="3">
    <location>
        <position position="455"/>
    </location>
</feature>
<feature type="modified residue" description="Phosphoserine" evidence="3">
    <location>
        <position position="457"/>
    </location>
</feature>
<feature type="glycosylation site" description="N-linked (GlcNAc...) asparagine" evidence="4">
    <location>
        <position position="2"/>
    </location>
</feature>
<feature type="glycosylation site" description="N-linked (GlcNAc...) asparagine" evidence="4">
    <location>
        <position position="12"/>
    </location>
</feature>
<feature type="disulfide bond" evidence="5">
    <location>
        <begin position="98"/>
        <end position="178"/>
    </location>
</feature>
<keyword id="KW-1003">Cell membrane</keyword>
<keyword id="KW-1015">Disulfide bond</keyword>
<keyword id="KW-0297">G-protein coupled receptor</keyword>
<keyword id="KW-0325">Glycoprotein</keyword>
<keyword id="KW-0472">Membrane</keyword>
<keyword id="KW-0597">Phosphoprotein</keyword>
<keyword id="KW-0628">Postsynaptic cell membrane</keyword>
<keyword id="KW-0675">Receptor</keyword>
<keyword id="KW-1185">Reference proteome</keyword>
<keyword id="KW-0770">Synapse</keyword>
<keyword id="KW-0807">Transducer</keyword>
<keyword id="KW-0812">Transmembrane</keyword>
<keyword id="KW-1133">Transmembrane helix</keyword>
<evidence type="ECO:0000250" key="1">
    <source>
        <dbReference type="UniProtKB" id="P11229"/>
    </source>
</evidence>
<evidence type="ECO:0000250" key="2">
    <source>
        <dbReference type="UniProtKB" id="P12657"/>
    </source>
</evidence>
<evidence type="ECO:0000255" key="3"/>
<evidence type="ECO:0000255" key="4">
    <source>
        <dbReference type="PROSITE-ProRule" id="PRU00498"/>
    </source>
</evidence>
<evidence type="ECO:0000255" key="5">
    <source>
        <dbReference type="PROSITE-ProRule" id="PRU00521"/>
    </source>
</evidence>
<evidence type="ECO:0000256" key="6">
    <source>
        <dbReference type="SAM" id="MobiDB-lite"/>
    </source>
</evidence>
<gene>
    <name type="primary">CHRM1</name>
</gene>
<dbReference type="EMBL" id="CR859546">
    <property type="protein sequence ID" value="CAH91711.1"/>
    <property type="molecule type" value="mRNA"/>
</dbReference>
<dbReference type="RefSeq" id="NP_001125994.1">
    <property type="nucleotide sequence ID" value="NM_001132522.1"/>
</dbReference>
<dbReference type="SMR" id="Q5R949"/>
<dbReference type="STRING" id="9601.ENSPPYP00000003626"/>
<dbReference type="GlyCosmos" id="Q5R949">
    <property type="glycosylation" value="2 sites, No reported glycans"/>
</dbReference>
<dbReference type="GeneID" id="100172935"/>
<dbReference type="KEGG" id="pon:100172935"/>
<dbReference type="CTD" id="1128"/>
<dbReference type="eggNOG" id="KOG4220">
    <property type="taxonomic scope" value="Eukaryota"/>
</dbReference>
<dbReference type="InParanoid" id="Q5R949"/>
<dbReference type="OrthoDB" id="10071887at2759"/>
<dbReference type="Proteomes" id="UP000001595">
    <property type="component" value="Unplaced"/>
</dbReference>
<dbReference type="GO" id="GO:0030425">
    <property type="term" value="C:dendrite"/>
    <property type="evidence" value="ECO:0007669"/>
    <property type="project" value="TreeGrafter"/>
</dbReference>
<dbReference type="GO" id="GO:0045211">
    <property type="term" value="C:postsynaptic membrane"/>
    <property type="evidence" value="ECO:0007669"/>
    <property type="project" value="UniProtKB-SubCell"/>
</dbReference>
<dbReference type="GO" id="GO:0016907">
    <property type="term" value="F:G protein-coupled acetylcholine receptor activity"/>
    <property type="evidence" value="ECO:0007669"/>
    <property type="project" value="InterPro"/>
</dbReference>
<dbReference type="GO" id="GO:0004993">
    <property type="term" value="F:G protein-coupled serotonin receptor activity"/>
    <property type="evidence" value="ECO:0007669"/>
    <property type="project" value="TreeGrafter"/>
</dbReference>
<dbReference type="GO" id="GO:0007197">
    <property type="term" value="P:adenylate cyclase-inhibiting G protein-coupled acetylcholine receptor signaling pathway"/>
    <property type="evidence" value="ECO:0007669"/>
    <property type="project" value="TreeGrafter"/>
</dbReference>
<dbReference type="GO" id="GO:0050890">
    <property type="term" value="P:cognition"/>
    <property type="evidence" value="ECO:0007669"/>
    <property type="project" value="InterPro"/>
</dbReference>
<dbReference type="GO" id="GO:0007187">
    <property type="term" value="P:G protein-coupled receptor signaling pathway, coupled to cyclic nucleotide second messenger"/>
    <property type="evidence" value="ECO:0007669"/>
    <property type="project" value="TreeGrafter"/>
</dbReference>
<dbReference type="GO" id="GO:0040012">
    <property type="term" value="P:regulation of locomotion"/>
    <property type="evidence" value="ECO:0007669"/>
    <property type="project" value="InterPro"/>
</dbReference>
<dbReference type="GO" id="GO:0046541">
    <property type="term" value="P:saliva secretion"/>
    <property type="evidence" value="ECO:0007669"/>
    <property type="project" value="InterPro"/>
</dbReference>
<dbReference type="CDD" id="cd17790">
    <property type="entry name" value="7tmA_mAChR_M1"/>
    <property type="match status" value="1"/>
</dbReference>
<dbReference type="FunFam" id="1.20.1070.10:FF:000103">
    <property type="entry name" value="Muscarinic acetylcholine receptor"/>
    <property type="match status" value="1"/>
</dbReference>
<dbReference type="FunFam" id="1.20.1070.10:FF:000162">
    <property type="entry name" value="Muscarinic acetylcholine receptor"/>
    <property type="match status" value="1"/>
</dbReference>
<dbReference type="Gene3D" id="1.20.1070.10">
    <property type="entry name" value="Rhodopsin 7-helix transmembrane proteins"/>
    <property type="match status" value="1"/>
</dbReference>
<dbReference type="InterPro" id="IPR000276">
    <property type="entry name" value="GPCR_Rhodpsn"/>
</dbReference>
<dbReference type="InterPro" id="IPR017452">
    <property type="entry name" value="GPCR_Rhodpsn_7TM"/>
</dbReference>
<dbReference type="InterPro" id="IPR002228">
    <property type="entry name" value="Musac_Ach_M1_rcpt"/>
</dbReference>
<dbReference type="InterPro" id="IPR000995">
    <property type="entry name" value="Musac_Ach_rcpt"/>
</dbReference>
<dbReference type="PANTHER" id="PTHR24247">
    <property type="entry name" value="5-HYDROXYTRYPTAMINE RECEPTOR"/>
    <property type="match status" value="1"/>
</dbReference>
<dbReference type="PANTHER" id="PTHR24247:SF182">
    <property type="entry name" value="MUSCARINIC ACETYLCHOLINE RECEPTOR M1"/>
    <property type="match status" value="1"/>
</dbReference>
<dbReference type="Pfam" id="PF00001">
    <property type="entry name" value="7tm_1"/>
    <property type="match status" value="1"/>
</dbReference>
<dbReference type="PRINTS" id="PR00237">
    <property type="entry name" value="GPCRRHODOPSN"/>
</dbReference>
<dbReference type="PRINTS" id="PR00243">
    <property type="entry name" value="MUSCARINICR"/>
</dbReference>
<dbReference type="PRINTS" id="PR00538">
    <property type="entry name" value="MUSCRINICM1R"/>
</dbReference>
<dbReference type="SUPFAM" id="SSF81321">
    <property type="entry name" value="Family A G protein-coupled receptor-like"/>
    <property type="match status" value="1"/>
</dbReference>
<dbReference type="PROSITE" id="PS00237">
    <property type="entry name" value="G_PROTEIN_RECEP_F1_1"/>
    <property type="match status" value="1"/>
</dbReference>
<dbReference type="PROSITE" id="PS50262">
    <property type="entry name" value="G_PROTEIN_RECEP_F1_2"/>
    <property type="match status" value="1"/>
</dbReference>
<name>ACM1_PONAB</name>
<comment type="function">
    <text>The muscarinic acetylcholine receptor mediates various cellular responses, including inhibition of adenylate cyclase, breakdown of phosphoinositides and modulation of potassium channels through the action of G proteins. Primary transducing effect is Pi turnover.</text>
</comment>
<comment type="subunit">
    <text evidence="1">Interacts with GPRASP2 (By similarity). Interacts with TMEM147 (By similarity).</text>
</comment>
<comment type="subcellular location">
    <subcellularLocation>
        <location>Cell membrane</location>
        <topology>Multi-pass membrane protein</topology>
    </subcellularLocation>
    <subcellularLocation>
        <location>Postsynaptic cell membrane</location>
        <topology>Multi-pass membrane protein</topology>
    </subcellularLocation>
</comment>
<comment type="similarity">
    <text evidence="5">Belongs to the G-protein coupled receptor 1 family. Muscarinic acetylcholine receptor subfamily. CHRM1 sub-subfamily.</text>
</comment>
<reference key="1">
    <citation type="submission" date="2004-11" db="EMBL/GenBank/DDBJ databases">
        <authorList>
            <consortium name="The German cDNA consortium"/>
        </authorList>
    </citation>
    <scope>NUCLEOTIDE SEQUENCE [LARGE SCALE MRNA]</scope>
    <source>
        <tissue>Brain cortex</tissue>
    </source>
</reference>
<organism>
    <name type="scientific">Pongo abelii</name>
    <name type="common">Sumatran orangutan</name>
    <name type="synonym">Pongo pygmaeus abelii</name>
    <dbReference type="NCBI Taxonomy" id="9601"/>
    <lineage>
        <taxon>Eukaryota</taxon>
        <taxon>Metazoa</taxon>
        <taxon>Chordata</taxon>
        <taxon>Craniata</taxon>
        <taxon>Vertebrata</taxon>
        <taxon>Euteleostomi</taxon>
        <taxon>Mammalia</taxon>
        <taxon>Eutheria</taxon>
        <taxon>Euarchontoglires</taxon>
        <taxon>Primates</taxon>
        <taxon>Haplorrhini</taxon>
        <taxon>Catarrhini</taxon>
        <taxon>Hominidae</taxon>
        <taxon>Pongo</taxon>
    </lineage>
</organism>
<accession>Q5R949</accession>